<name>CHS2_SOYBN</name>
<protein>
    <recommendedName>
        <fullName>Chalcone synthase 2</fullName>
        <ecNumber>2.3.1.74</ecNumber>
    </recommendedName>
    <alternativeName>
        <fullName>Naringenin-chalcone synthase 2</fullName>
    </alternativeName>
</protein>
<accession>P17957</accession>
<organism>
    <name type="scientific">Glycine max</name>
    <name type="common">Soybean</name>
    <name type="synonym">Glycine hispida</name>
    <dbReference type="NCBI Taxonomy" id="3847"/>
    <lineage>
        <taxon>Eukaryota</taxon>
        <taxon>Viridiplantae</taxon>
        <taxon>Streptophyta</taxon>
        <taxon>Embryophyta</taxon>
        <taxon>Tracheophyta</taxon>
        <taxon>Spermatophyta</taxon>
        <taxon>Magnoliopsida</taxon>
        <taxon>eudicotyledons</taxon>
        <taxon>Gunneridae</taxon>
        <taxon>Pentapetalae</taxon>
        <taxon>rosids</taxon>
        <taxon>fabids</taxon>
        <taxon>Fabales</taxon>
        <taxon>Fabaceae</taxon>
        <taxon>Papilionoideae</taxon>
        <taxon>50 kb inversion clade</taxon>
        <taxon>NPAAA clade</taxon>
        <taxon>indigoferoid/millettioid clade</taxon>
        <taxon>Phaseoleae</taxon>
        <taxon>Glycine</taxon>
        <taxon>Glycine subgen. Soja</taxon>
    </lineage>
</organism>
<feature type="chain" id="PRO_0000216063" description="Chalcone synthase 2">
    <location>
        <begin position="1"/>
        <end position="388"/>
    </location>
</feature>
<feature type="active site" evidence="1">
    <location>
        <position position="164"/>
    </location>
</feature>
<feature type="sequence conflict" description="In Ref. 2; CAA46590." evidence="2" ref="2">
    <original>K</original>
    <variation>Q</variation>
    <location>
        <position position="9"/>
    </location>
</feature>
<feature type="sequence conflict" description="In Ref. 2; CAA46590." evidence="2" ref="2">
    <original>M</original>
    <variation>V</variation>
    <location>
        <position position="100"/>
    </location>
</feature>
<feature type="sequence conflict" description="In Ref. 2; CAA46590." evidence="2" ref="2">
    <original>R</original>
    <variation>W</variation>
    <location>
        <position position="299"/>
    </location>
</feature>
<feature type="sequence conflict" description="In Ref. 2; CAA46590." evidence="2" ref="2">
    <original>T</original>
    <variation>S</variation>
    <location>
        <position position="387"/>
    </location>
</feature>
<dbReference type="EC" id="2.3.1.74"/>
<dbReference type="EMBL" id="X52097">
    <property type="protein sequence ID" value="CAA36317.1"/>
    <property type="molecule type" value="Genomic_DNA"/>
</dbReference>
<dbReference type="EMBL" id="X65636">
    <property type="protein sequence ID" value="CAA46590.1"/>
    <property type="molecule type" value="Genomic_DNA"/>
</dbReference>
<dbReference type="PIR" id="JQ2249">
    <property type="entry name" value="JQ2249"/>
</dbReference>
<dbReference type="PIR" id="S16338">
    <property type="entry name" value="SYSYCN"/>
</dbReference>
<dbReference type="RefSeq" id="XP_003524935.1">
    <property type="nucleotide sequence ID" value="XM_003524887.3"/>
</dbReference>
<dbReference type="SMR" id="P17957"/>
<dbReference type="STRING" id="3847.P17957"/>
<dbReference type="InParanoid" id="P17957"/>
<dbReference type="UniPathway" id="UPA00154"/>
<dbReference type="Proteomes" id="UP000008827">
    <property type="component" value="Unplaced"/>
</dbReference>
<dbReference type="GO" id="GO:0016747">
    <property type="term" value="F:acyltransferase activity, transferring groups other than amino-acyl groups"/>
    <property type="evidence" value="ECO:0000318"/>
    <property type="project" value="GO_Central"/>
</dbReference>
<dbReference type="GO" id="GO:0016210">
    <property type="term" value="F:naringenin-chalcone synthase activity"/>
    <property type="evidence" value="ECO:0007669"/>
    <property type="project" value="UniProtKB-EC"/>
</dbReference>
<dbReference type="GO" id="GO:0009813">
    <property type="term" value="P:flavonoid biosynthetic process"/>
    <property type="evidence" value="ECO:0007669"/>
    <property type="project" value="UniProtKB-UniPathway"/>
</dbReference>
<dbReference type="GO" id="GO:0030639">
    <property type="term" value="P:polyketide biosynthetic process"/>
    <property type="evidence" value="ECO:0000318"/>
    <property type="project" value="GO_Central"/>
</dbReference>
<dbReference type="CDD" id="cd00831">
    <property type="entry name" value="CHS_like"/>
    <property type="match status" value="1"/>
</dbReference>
<dbReference type="FunFam" id="3.40.47.10:FF:000014">
    <property type="entry name" value="Chalcone synthase 1"/>
    <property type="match status" value="1"/>
</dbReference>
<dbReference type="FunFam" id="3.40.47.10:FF:000025">
    <property type="entry name" value="Chalcone synthase 2"/>
    <property type="match status" value="1"/>
</dbReference>
<dbReference type="Gene3D" id="3.40.47.10">
    <property type="match status" value="2"/>
</dbReference>
<dbReference type="InterPro" id="IPR012328">
    <property type="entry name" value="Chalcone/stilbene_synt_C"/>
</dbReference>
<dbReference type="InterPro" id="IPR001099">
    <property type="entry name" value="Chalcone/stilbene_synt_N"/>
</dbReference>
<dbReference type="InterPro" id="IPR018088">
    <property type="entry name" value="Chalcone/stilbene_synthase_AS"/>
</dbReference>
<dbReference type="InterPro" id="IPR011141">
    <property type="entry name" value="Polyketide_synthase_type-III"/>
</dbReference>
<dbReference type="InterPro" id="IPR016039">
    <property type="entry name" value="Thiolase-like"/>
</dbReference>
<dbReference type="PANTHER" id="PTHR11877:SF100">
    <property type="entry name" value="CHALCONE SYNTHASE 3"/>
    <property type="match status" value="1"/>
</dbReference>
<dbReference type="PANTHER" id="PTHR11877">
    <property type="entry name" value="HYDROXYMETHYLGLUTARYL-COA SYNTHASE"/>
    <property type="match status" value="1"/>
</dbReference>
<dbReference type="Pfam" id="PF02797">
    <property type="entry name" value="Chal_sti_synt_C"/>
    <property type="match status" value="1"/>
</dbReference>
<dbReference type="Pfam" id="PF00195">
    <property type="entry name" value="Chal_sti_synt_N"/>
    <property type="match status" value="1"/>
</dbReference>
<dbReference type="PIRSF" id="PIRSF000451">
    <property type="entry name" value="PKS_III"/>
    <property type="match status" value="1"/>
</dbReference>
<dbReference type="SUPFAM" id="SSF53901">
    <property type="entry name" value="Thiolase-like"/>
    <property type="match status" value="2"/>
</dbReference>
<dbReference type="PROSITE" id="PS00441">
    <property type="entry name" value="CHALCONE_SYNTH"/>
    <property type="match status" value="1"/>
</dbReference>
<comment type="function">
    <text>The primary product of this enzyme is 4,2',4',6'-tetrahydroxychalcone (also termed naringenin-chalcone or chalcone) which can under specific conditions spontaneously isomerize into naringenin.</text>
</comment>
<comment type="catalytic activity">
    <reaction evidence="1">
        <text>(E)-4-coumaroyl-CoA + 3 malonyl-CoA + 3 H(+) = 2',4,4',6'-tetrahydroxychalcone + 3 CO2 + 4 CoA</text>
        <dbReference type="Rhea" id="RHEA:11128"/>
        <dbReference type="ChEBI" id="CHEBI:15378"/>
        <dbReference type="ChEBI" id="CHEBI:15413"/>
        <dbReference type="ChEBI" id="CHEBI:16526"/>
        <dbReference type="ChEBI" id="CHEBI:57287"/>
        <dbReference type="ChEBI" id="CHEBI:57384"/>
        <dbReference type="ChEBI" id="CHEBI:85008"/>
        <dbReference type="EC" id="2.3.1.74"/>
    </reaction>
</comment>
<comment type="pathway">
    <text>Secondary metabolite biosynthesis; flavonoid biosynthesis.</text>
</comment>
<comment type="similarity">
    <text evidence="2">Belongs to the thiolase-like superfamily. Chalcone/stilbene synthases family.</text>
</comment>
<evidence type="ECO:0000255" key="1">
    <source>
        <dbReference type="PROSITE-ProRule" id="PRU10023"/>
    </source>
</evidence>
<evidence type="ECO:0000305" key="2"/>
<keyword id="KW-0012">Acyltransferase</keyword>
<keyword id="KW-0284">Flavonoid biosynthesis</keyword>
<keyword id="KW-1185">Reference proteome</keyword>
<keyword id="KW-0808">Transferase</keyword>
<proteinExistence type="inferred from homology"/>
<gene>
    <name type="primary">CHS2</name>
</gene>
<sequence>MVSVEEIRKAQRAEGPATVMAIGTATPPNCVDQSTYPDYYFRITNSEHMTELKEKFKRMCDKSMIKKRYMYLNEEILKENPSVCAYMAPSLDARQDMVVMEVPKLGKEAATKAIKEWGQPKSKITHLIFCTTSGVDMPGADYQLTKLLGLRPSVKRYMMYQQGCFAGGTVLRLAKDLAENNKGARVLVVCSEITAVTFRGPTDTHLDSLVGQALFGDGAAAVIVGSDPLPVEKPLFQLVWTAQTILPDSEGAIDGHLREVGLTFHLLKDVPGLISKNIEKALVEAFQPLGISDYNSIFRIAHPGGPAILDQVEAKLGLKPEKMEATRHVLSEYGNMSSACVLFILDQMRKKSIENGLGTTGEGLDWGVLFGFGPGLTVETVVLRSVTV</sequence>
<reference key="1">
    <citation type="journal article" date="1990" name="Nucleic Acids Res.">
        <title>Nucleotide sequence of one member of soybean chalcone synthase multi-gene family.</title>
        <authorList>
            <person name="Akada S."/>
            <person name="Kung S.D."/>
            <person name="Dube S.K."/>
        </authorList>
    </citation>
    <scope>NUCLEOTIDE SEQUENCE [GENOMIC DNA]</scope>
    <source>
        <strain>cv. Williams</strain>
    </source>
</reference>
<reference key="2">
    <citation type="journal article" date="1993" name="Plant Physiol.">
        <title>Nucleotide sequence and putative regulatory elements of gene 2 of the soybean (Glycine max) chalcone synthase multigene family.</title>
        <authorList>
            <person name="Akada S."/>
            <person name="Kung S.D."/>
            <person name="Dube S.K."/>
        </authorList>
    </citation>
    <scope>NUCLEOTIDE SEQUENCE [GENOMIC DNA]</scope>
    <source>
        <strain>cv. Williams</strain>
    </source>
</reference>